<gene>
    <name type="primary">PPIA</name>
</gene>
<organism>
    <name type="scientific">Symphalangus syndactylus</name>
    <name type="common">Siamang</name>
    <name type="synonym">Hylobates syndactylus</name>
    <dbReference type="NCBI Taxonomy" id="9590"/>
    <lineage>
        <taxon>Eukaryota</taxon>
        <taxon>Metazoa</taxon>
        <taxon>Chordata</taxon>
        <taxon>Craniata</taxon>
        <taxon>Vertebrata</taxon>
        <taxon>Euteleostomi</taxon>
        <taxon>Mammalia</taxon>
        <taxon>Eutheria</taxon>
        <taxon>Euarchontoglires</taxon>
        <taxon>Primates</taxon>
        <taxon>Haplorrhini</taxon>
        <taxon>Catarrhini</taxon>
        <taxon>Hylobatidae</taxon>
        <taxon>Symphalangus</taxon>
    </lineage>
</organism>
<keyword id="KW-0007">Acetylation</keyword>
<keyword id="KW-0053">Apoptosis</keyword>
<keyword id="KW-0963">Cytoplasm</keyword>
<keyword id="KW-0325">Glycoprotein</keyword>
<keyword id="KW-0413">Isomerase</keyword>
<keyword id="KW-1017">Isopeptide bond</keyword>
<keyword id="KW-0539">Nucleus</keyword>
<keyword id="KW-0597">Phosphoprotein</keyword>
<keyword id="KW-0697">Rotamase</keyword>
<keyword id="KW-0964">Secreted</keyword>
<keyword id="KW-0832">Ubl conjugation</keyword>
<dbReference type="EC" id="5.2.1.8" evidence="2"/>
<dbReference type="EMBL" id="DQ251281">
    <property type="protein sequence ID" value="ABB77881.1"/>
    <property type="molecule type" value="Genomic_DNA"/>
</dbReference>
<dbReference type="SMR" id="Q0ZQK6"/>
<dbReference type="GlyCosmos" id="Q0ZQK6">
    <property type="glycosylation" value="1 site, No reported glycans"/>
</dbReference>
<dbReference type="GO" id="GO:0005737">
    <property type="term" value="C:cytoplasm"/>
    <property type="evidence" value="ECO:0000250"/>
    <property type="project" value="UniProtKB"/>
</dbReference>
<dbReference type="GO" id="GO:0005829">
    <property type="term" value="C:cytosol"/>
    <property type="evidence" value="ECO:0000250"/>
    <property type="project" value="UniProtKB"/>
</dbReference>
<dbReference type="GO" id="GO:0005576">
    <property type="term" value="C:extracellular region"/>
    <property type="evidence" value="ECO:0000250"/>
    <property type="project" value="UniProtKB"/>
</dbReference>
<dbReference type="GO" id="GO:0005634">
    <property type="term" value="C:nucleus"/>
    <property type="evidence" value="ECO:0000250"/>
    <property type="project" value="UniProtKB"/>
</dbReference>
<dbReference type="GO" id="GO:0016018">
    <property type="term" value="F:cyclosporin A binding"/>
    <property type="evidence" value="ECO:0007669"/>
    <property type="project" value="TreeGrafter"/>
</dbReference>
<dbReference type="GO" id="GO:1904399">
    <property type="term" value="F:heparan sulfate binding"/>
    <property type="evidence" value="ECO:0000250"/>
    <property type="project" value="UniProtKB"/>
</dbReference>
<dbReference type="GO" id="GO:0005178">
    <property type="term" value="F:integrin binding"/>
    <property type="evidence" value="ECO:0000250"/>
    <property type="project" value="UniProtKB"/>
</dbReference>
<dbReference type="GO" id="GO:0003755">
    <property type="term" value="F:peptidyl-prolyl cis-trans isomerase activity"/>
    <property type="evidence" value="ECO:0000250"/>
    <property type="project" value="UniProtKB"/>
</dbReference>
<dbReference type="GO" id="GO:0032148">
    <property type="term" value="P:activation of protein kinase B activity"/>
    <property type="evidence" value="ECO:0000250"/>
    <property type="project" value="UniProtKB"/>
</dbReference>
<dbReference type="GO" id="GO:0006915">
    <property type="term" value="P:apoptotic process"/>
    <property type="evidence" value="ECO:0000250"/>
    <property type="project" value="UniProtKB"/>
</dbReference>
<dbReference type="GO" id="GO:0060352">
    <property type="term" value="P:cell adhesion molecule production"/>
    <property type="evidence" value="ECO:0000250"/>
    <property type="project" value="UniProtKB"/>
</dbReference>
<dbReference type="GO" id="GO:0034599">
    <property type="term" value="P:cellular response to oxidative stress"/>
    <property type="evidence" value="ECO:0000250"/>
    <property type="project" value="UniProtKB"/>
</dbReference>
<dbReference type="GO" id="GO:0042118">
    <property type="term" value="P:endothelial cell activation"/>
    <property type="evidence" value="ECO:0000250"/>
    <property type="project" value="UniProtKB"/>
</dbReference>
<dbReference type="GO" id="GO:0030595">
    <property type="term" value="P:leukocyte chemotaxis"/>
    <property type="evidence" value="ECO:0000250"/>
    <property type="project" value="UniProtKB"/>
</dbReference>
<dbReference type="GO" id="GO:1902176">
    <property type="term" value="P:negative regulation of oxidative stress-induced intrinsic apoptotic signaling pathway"/>
    <property type="evidence" value="ECO:0000250"/>
    <property type="project" value="UniProtKB"/>
</dbReference>
<dbReference type="GO" id="GO:0061944">
    <property type="term" value="P:negative regulation of protein K48-linked ubiquitination"/>
    <property type="evidence" value="ECO:0000250"/>
    <property type="project" value="UniProtKB"/>
</dbReference>
<dbReference type="GO" id="GO:0006469">
    <property type="term" value="P:negative regulation of protein kinase activity"/>
    <property type="evidence" value="ECO:0000250"/>
    <property type="project" value="UniProtKB"/>
</dbReference>
<dbReference type="GO" id="GO:0001933">
    <property type="term" value="P:negative regulation of protein phosphorylation"/>
    <property type="evidence" value="ECO:0000250"/>
    <property type="project" value="UniProtKB"/>
</dbReference>
<dbReference type="GO" id="GO:0032873">
    <property type="term" value="P:negative regulation of stress-activated MAPK cascade"/>
    <property type="evidence" value="ECO:0000250"/>
    <property type="project" value="UniProtKB"/>
</dbReference>
<dbReference type="GO" id="GO:0030593">
    <property type="term" value="P:neutrophil chemotaxis"/>
    <property type="evidence" value="ECO:0000250"/>
    <property type="project" value="UniProtKB"/>
</dbReference>
<dbReference type="GO" id="GO:0030168">
    <property type="term" value="P:platelet activation"/>
    <property type="evidence" value="ECO:0000250"/>
    <property type="project" value="UniProtKB"/>
</dbReference>
<dbReference type="GO" id="GO:0070527">
    <property type="term" value="P:platelet aggregation"/>
    <property type="evidence" value="ECO:0000250"/>
    <property type="project" value="UniProtKB"/>
</dbReference>
<dbReference type="GO" id="GO:0043410">
    <property type="term" value="P:positive regulation of MAPK cascade"/>
    <property type="evidence" value="ECO:0000250"/>
    <property type="project" value="UniProtKB"/>
</dbReference>
<dbReference type="GO" id="GO:0051092">
    <property type="term" value="P:positive regulation of NF-kappaB transcription factor activity"/>
    <property type="evidence" value="ECO:0000250"/>
    <property type="project" value="UniProtKB"/>
</dbReference>
<dbReference type="GO" id="GO:0001934">
    <property type="term" value="P:positive regulation of protein phosphorylation"/>
    <property type="evidence" value="ECO:0000250"/>
    <property type="project" value="UniProtKB"/>
</dbReference>
<dbReference type="GO" id="GO:0006457">
    <property type="term" value="P:protein folding"/>
    <property type="evidence" value="ECO:0007669"/>
    <property type="project" value="InterPro"/>
</dbReference>
<dbReference type="GO" id="GO:0000413">
    <property type="term" value="P:protein peptidyl-prolyl isomerization"/>
    <property type="evidence" value="ECO:0000250"/>
    <property type="project" value="UniProtKB"/>
</dbReference>
<dbReference type="GO" id="GO:2001233">
    <property type="term" value="P:regulation of apoptotic signaling pathway"/>
    <property type="evidence" value="ECO:0000250"/>
    <property type="project" value="UniProtKB"/>
</dbReference>
<dbReference type="GO" id="GO:0045069">
    <property type="term" value="P:regulation of viral genome replication"/>
    <property type="evidence" value="ECO:0000250"/>
    <property type="project" value="UniProtKB"/>
</dbReference>
<dbReference type="CDD" id="cd01926">
    <property type="entry name" value="cyclophilin_ABH_like"/>
    <property type="match status" value="1"/>
</dbReference>
<dbReference type="FunFam" id="2.40.100.10:FF:000011">
    <property type="entry name" value="Peptidyl-prolyl cis-trans isomerase A"/>
    <property type="match status" value="1"/>
</dbReference>
<dbReference type="Gene3D" id="2.40.100.10">
    <property type="entry name" value="Cyclophilin-like"/>
    <property type="match status" value="1"/>
</dbReference>
<dbReference type="InterPro" id="IPR029000">
    <property type="entry name" value="Cyclophilin-like_dom_sf"/>
</dbReference>
<dbReference type="InterPro" id="IPR024936">
    <property type="entry name" value="Cyclophilin-type_PPIase"/>
</dbReference>
<dbReference type="InterPro" id="IPR020892">
    <property type="entry name" value="Cyclophilin-type_PPIase_CS"/>
</dbReference>
<dbReference type="InterPro" id="IPR002130">
    <property type="entry name" value="Cyclophilin-type_PPIase_dom"/>
</dbReference>
<dbReference type="PANTHER" id="PTHR11071">
    <property type="entry name" value="PEPTIDYL-PROLYL CIS-TRANS ISOMERASE"/>
    <property type="match status" value="1"/>
</dbReference>
<dbReference type="PANTHER" id="PTHR11071:SF490">
    <property type="entry name" value="PEPTIDYL-PROLYL CIS-TRANS ISOMERASE A"/>
    <property type="match status" value="1"/>
</dbReference>
<dbReference type="Pfam" id="PF00160">
    <property type="entry name" value="Pro_isomerase"/>
    <property type="match status" value="1"/>
</dbReference>
<dbReference type="PIRSF" id="PIRSF001467">
    <property type="entry name" value="Peptidylpro_ismrse"/>
    <property type="match status" value="1"/>
</dbReference>
<dbReference type="PRINTS" id="PR00153">
    <property type="entry name" value="CSAPPISMRASE"/>
</dbReference>
<dbReference type="SUPFAM" id="SSF50891">
    <property type="entry name" value="Cyclophilin-like"/>
    <property type="match status" value="1"/>
</dbReference>
<dbReference type="PROSITE" id="PS00170">
    <property type="entry name" value="CSA_PPIASE_1"/>
    <property type="match status" value="1"/>
</dbReference>
<dbReference type="PROSITE" id="PS50072">
    <property type="entry name" value="CSA_PPIASE_2"/>
    <property type="match status" value="1"/>
</dbReference>
<protein>
    <recommendedName>
        <fullName>Peptidyl-prolyl cis-trans isomerase A</fullName>
        <shortName>PPIase A</shortName>
        <ecNumber evidence="2">5.2.1.8</ecNumber>
    </recommendedName>
    <alternativeName>
        <fullName>Cyclophilin A</fullName>
    </alternativeName>
    <alternativeName>
        <fullName>Cyclosporin A-binding protein</fullName>
    </alternativeName>
    <alternativeName>
        <fullName>Rotamase A</fullName>
    </alternativeName>
    <component>
        <recommendedName>
            <fullName>Peptidyl-prolyl cis-trans isomerase A, N-terminally processed</fullName>
        </recommendedName>
    </component>
</protein>
<comment type="function">
    <text evidence="1 2">Catalyzes the cis-trans isomerization of proline imidic peptide bonds in oligopeptides (By similarity). Exerts a strong chemotactic effect on leukocytes partly through activation of one of its membrane receptors BSG/CD147, initiating a signaling cascade that culminates in MAPK/ERK activation (By similarity). Activates endothelial cells (ECs) in a proinflammatory manner by stimulating activation of NF-kappa-B and ERK, JNK and p38 MAP-kinases and by inducing expression of adhesion molecules including SELE and VCAM1 (By similarity). Induces apoptosis in ECs by promoting the FOXO1-dependent expression of CCL2 and BCL2L11 which are involved in EC chemotaxis and apoptosis (By similarity). In response to oxidative stress, initiates proapoptotic and antiapoptotic signaling in ECs via activation of NF-kappa-B and AKT1 and up-regulation of antiapoptotic protein BCL2 (By similarity). Negatively regulates MAP3K5/ASK1 kinase activity, autophosphorylation and oxidative stress-induced apoptosis mediated by MAP3K5/ASK1 (By similarity). Necessary for the assembly of TARDBP in heterogeneous nuclear ribonucleoprotein (hnRNP) complexes and regulates TARDBP binding to RNA UG repeats and TARDBP-dependent expression of HDAC6, ATG7 and VCP which are involved in clearance of protein aggregates (By similarity). Plays an important role in platelet activation and aggregation (By similarity). Regulates calcium mobilization and integrin ITGA2B:ITGB3 bidirectional signaling via increased ROS production as well as by facilitating the interaction between integrin and the cell cytoskeleton (By similarity). Binds heparan sulfate glycosaminoglycans (By similarity).</text>
</comment>
<comment type="catalytic activity">
    <reaction evidence="2">
        <text>[protein]-peptidylproline (omega=180) = [protein]-peptidylproline (omega=0)</text>
        <dbReference type="Rhea" id="RHEA:16237"/>
        <dbReference type="Rhea" id="RHEA-COMP:10747"/>
        <dbReference type="Rhea" id="RHEA-COMP:10748"/>
        <dbReference type="ChEBI" id="CHEBI:83833"/>
        <dbReference type="ChEBI" id="CHEBI:83834"/>
        <dbReference type="EC" id="5.2.1.8"/>
    </reaction>
</comment>
<comment type="activity regulation">
    <text evidence="2">Binds cyclosporin A (CsA). CsA mediates some of its effects via an inhibitory action on PPIase.</text>
</comment>
<comment type="subunit">
    <text evidence="1 2">Interacts with protein phosphatase PPP3CA/calcineurin A (By similarity). Interacts with isoform 2 of BSG/CD147 (By similarity). Interacts with FOXO1; the interaction promotes FOXO1 dephosphorylation, nuclear accumulation and transcriptional activity (By similarity). Interacts with integrin ITGA2B:ITGB3; the interaction is ROS and peptidyl-prolyl cis-trans isomerase (PPIase) activity-dependent and is increased in the presence of thrombin (By similarity). Interacts with MAP3K5 (By similarity). Interacts with TARDBP; the interaction is dependent on the RNA-binding activity of TARDBP and the PPIase activity of PPIA/CYPA and the acetylation of PPIA/CYPA at Lys-125 favors the interaction (By similarity). Interacts with HNRNPA1, HNRNPA2B1, HNRNPC, RBMX, HNRNPK and HNRNPM (By similarity).</text>
</comment>
<comment type="subcellular location">
    <subcellularLocation>
        <location evidence="2">Cytoplasm</location>
    </subcellularLocation>
    <subcellularLocation>
        <location evidence="2">Secreted</location>
    </subcellularLocation>
    <subcellularLocation>
        <location evidence="2">Nucleus</location>
    </subcellularLocation>
    <text evidence="2">Secretion occurs in response to oxidative stress in vascular smooth muscle through a vesicular secretory pathway that involves actin remodeling and myosin II activation, and mediates ERK1/2 activation.</text>
</comment>
<comment type="PTM">
    <text evidence="2">Acetylation at Lys-125 markedly inhibits catalysis of cis to trans isomerization (By similarity). PPIA acetylation also antagonizes the immunosuppressive effects of cyclosporine by inhibiting the sequential steps of cyclosporine binding and calcineurin inhibition (By similarity). Acetylation at Lys-125 favors the interaction with TARDBP (By similarity).</text>
</comment>
<comment type="similarity">
    <text evidence="5">Belongs to the cyclophilin-type PPIase family. PPIase A subfamily.</text>
</comment>
<accession>Q0ZQK6</accession>
<reference key="1">
    <citation type="journal article" date="2006" name="Retrovirology">
        <title>Patterns of evolution of host proteins involved in retroviral pathogenesis.</title>
        <authorList>
            <person name="Ortiz M."/>
            <person name="Bleiber G."/>
            <person name="Martinez R."/>
            <person name="Kaessmann H."/>
            <person name="Telenti A."/>
        </authorList>
    </citation>
    <scope>NUCLEOTIDE SEQUENCE [GENOMIC DNA]</scope>
</reference>
<evidence type="ECO:0000250" key="1">
    <source>
        <dbReference type="UniProtKB" id="P17742"/>
    </source>
</evidence>
<evidence type="ECO:0000250" key="2">
    <source>
        <dbReference type="UniProtKB" id="P62937"/>
    </source>
</evidence>
<evidence type="ECO:0000255" key="3"/>
<evidence type="ECO:0000255" key="4">
    <source>
        <dbReference type="PROSITE-ProRule" id="PRU00156"/>
    </source>
</evidence>
<evidence type="ECO:0000305" key="5"/>
<name>PPIA_SYMSY</name>
<proteinExistence type="inferred from homology"/>
<feature type="chain" id="PRO_0000423243" description="Peptidyl-prolyl cis-trans isomerase A">
    <location>
        <begin position="1"/>
        <end position="165"/>
    </location>
</feature>
<feature type="initiator methionine" description="Removed; alternate" evidence="2">
    <location>
        <position position="1"/>
    </location>
</feature>
<feature type="chain" id="PRO_0000260462" description="Peptidyl-prolyl cis-trans isomerase A, N-terminally processed">
    <location>
        <begin position="2"/>
        <end position="165"/>
    </location>
</feature>
<feature type="domain" description="PPIase cyclophilin-type" evidence="4">
    <location>
        <begin position="7"/>
        <end position="163"/>
    </location>
</feature>
<feature type="modified residue" description="N-acetylmethionine" evidence="2">
    <location>
        <position position="1"/>
    </location>
</feature>
<feature type="modified residue" description="N-acetylvaline; in Peptidyl-prolyl cis-trans isomerase A, N-terminally processed" evidence="2">
    <location>
        <position position="2"/>
    </location>
</feature>
<feature type="modified residue" description="N6-acetyllysine; alternate" evidence="2">
    <location>
        <position position="28"/>
    </location>
</feature>
<feature type="modified residue" description="N6-acetyllysine" evidence="2">
    <location>
        <position position="44"/>
    </location>
</feature>
<feature type="modified residue" description="N6-acetyllysine" evidence="2">
    <location>
        <position position="76"/>
    </location>
</feature>
<feature type="modified residue" description="Phosphoserine" evidence="2">
    <location>
        <position position="77"/>
    </location>
</feature>
<feature type="modified residue" description="N6-acetyllysine; alternate" evidence="2">
    <location>
        <position position="82"/>
    </location>
</feature>
<feature type="modified residue" description="Phosphothreonine" evidence="2">
    <location>
        <position position="93"/>
    </location>
</feature>
<feature type="modified residue" description="N6-acetyllysine" evidence="2">
    <location>
        <position position="125"/>
    </location>
</feature>
<feature type="modified residue" description="N6-acetyllysine" evidence="2">
    <location>
        <position position="131"/>
    </location>
</feature>
<feature type="modified residue" description="N6-acetyllysine" evidence="1">
    <location>
        <position position="133"/>
    </location>
</feature>
<feature type="glycosylation site" description="N-linked (GlcNAc...) asparagine" evidence="3">
    <location>
        <position position="108"/>
    </location>
</feature>
<feature type="cross-link" description="Glycyl lysine isopeptide (Lys-Gly) (interchain with G-Cter in SUMO2); alternate" evidence="2">
    <location>
        <position position="28"/>
    </location>
</feature>
<feature type="cross-link" description="Glycyl lysine isopeptide (Lys-Gly) (interchain with G-Cter in ubiquitin); alternate" evidence="2">
    <location>
        <position position="28"/>
    </location>
</feature>
<feature type="cross-link" description="Glycyl lysine isopeptide (Lys-Gly) (interchain with G-Cter in SUMO2); alternate" evidence="2">
    <location>
        <position position="82"/>
    </location>
</feature>
<sequence>MVNPTVFFDIAVDGEPLGRVSFELFADKVPKTAENFRALSTGEKGFGYKGSCFHRIIPGFMCQGGDFTRHNGTGGKSIYGEKFEDENFILKHTGPGILSMANAGPNTNGSQFFICTAKTEWLDGKHVVFGKVKEGMNIVEAMERFGSRNGKTSKKITIADCGQLE</sequence>